<accession>Q8WJR5</accession>
<protein>
    <recommendedName>
        <fullName evidence="1">Maturase K</fullName>
    </recommendedName>
    <alternativeName>
        <fullName evidence="1">Intron maturase</fullName>
    </alternativeName>
</protein>
<feature type="chain" id="PRO_0000143211" description="Maturase K">
    <location>
        <begin position="1"/>
        <end position="504"/>
    </location>
</feature>
<keyword id="KW-0150">Chloroplast</keyword>
<keyword id="KW-0507">mRNA processing</keyword>
<keyword id="KW-0934">Plastid</keyword>
<keyword id="KW-0694">RNA-binding</keyword>
<keyword id="KW-0819">tRNA processing</keyword>
<dbReference type="EMBL" id="AF288093">
    <property type="protein sequence ID" value="AAL35987.1"/>
    <property type="molecule type" value="Genomic_DNA"/>
</dbReference>
<dbReference type="GO" id="GO:0009507">
    <property type="term" value="C:chloroplast"/>
    <property type="evidence" value="ECO:0007669"/>
    <property type="project" value="UniProtKB-SubCell"/>
</dbReference>
<dbReference type="GO" id="GO:0003723">
    <property type="term" value="F:RNA binding"/>
    <property type="evidence" value="ECO:0007669"/>
    <property type="project" value="UniProtKB-KW"/>
</dbReference>
<dbReference type="GO" id="GO:0006397">
    <property type="term" value="P:mRNA processing"/>
    <property type="evidence" value="ECO:0007669"/>
    <property type="project" value="UniProtKB-KW"/>
</dbReference>
<dbReference type="GO" id="GO:0008380">
    <property type="term" value="P:RNA splicing"/>
    <property type="evidence" value="ECO:0007669"/>
    <property type="project" value="UniProtKB-UniRule"/>
</dbReference>
<dbReference type="GO" id="GO:0008033">
    <property type="term" value="P:tRNA processing"/>
    <property type="evidence" value="ECO:0007669"/>
    <property type="project" value="UniProtKB-KW"/>
</dbReference>
<dbReference type="HAMAP" id="MF_01390">
    <property type="entry name" value="MatK"/>
    <property type="match status" value="1"/>
</dbReference>
<dbReference type="InterPro" id="IPR024937">
    <property type="entry name" value="Domain_X"/>
</dbReference>
<dbReference type="InterPro" id="IPR002866">
    <property type="entry name" value="Maturase_MatK"/>
</dbReference>
<dbReference type="InterPro" id="IPR024942">
    <property type="entry name" value="Maturase_MatK_N"/>
</dbReference>
<dbReference type="PANTHER" id="PTHR34811">
    <property type="entry name" value="MATURASE K"/>
    <property type="match status" value="1"/>
</dbReference>
<dbReference type="PANTHER" id="PTHR34811:SF1">
    <property type="entry name" value="MATURASE K"/>
    <property type="match status" value="1"/>
</dbReference>
<dbReference type="Pfam" id="PF01348">
    <property type="entry name" value="Intron_maturas2"/>
    <property type="match status" value="1"/>
</dbReference>
<dbReference type="Pfam" id="PF01824">
    <property type="entry name" value="MatK_N"/>
    <property type="match status" value="1"/>
</dbReference>
<sequence length="504" mass="59959">MEEFQGYLELDKYQQHDFLYPLIFREYIYALAYDHGLNRSILLDNVGYENKYSLLIIKRLISRMYKQNNFIISANDSNQNKFLGYNKNLYSQMISEGFAVIVEIPFSLRLVSSLEATEIVKSYNLRSIHSIFPFLEDKFSHLNYVSDVLIPYPIHLEILVQTLRYWVKDPSSLHLLRLFLHEYYNLNSLITPNKFIFSKSNPRLFLLLYNSHVCEYESILLFIRNQSSHLRLTSSGIFFERIHFYEKRKYPGEEVFSNDFPSAILWFFKDPFMHYVRYQGKSILASKDSALLMNKWKYYLVNLWQCHSYVWSQPGRICINQLSKHSIYFLGYFSSMRPNLSVVRSQMLENSFIMDNAMKKFDTLVPIIPLIRSLAKVKFCNTLGHPISKSAWADSSDFDIIDRFVRICRNLSHYYSGSSRKKSLYRIKYILRLSCVKTLARKHKSTVRTFLKRLGSKLLEEFFTEEQQILSLIFPRASYTLKKFYRGRIWYLDIFCINDLANHE</sequence>
<gene>
    <name evidence="1" type="primary">matK</name>
</gene>
<reference key="1">
    <citation type="journal article" date="2002" name="Plant Syst. Evol.">
        <title>Phylogenetic relationships in Rosaceae inferred from chloroplast matK and trnL-trnF nucleotide sequence data.</title>
        <authorList>
            <person name="Potter D."/>
            <person name="Gao F."/>
            <person name="Bortiri P.E."/>
            <person name="Oh S.-H."/>
            <person name="Baggett S."/>
        </authorList>
    </citation>
    <scope>NUCLEOTIDE SEQUENCE [GENOMIC DNA]</scope>
</reference>
<evidence type="ECO:0000255" key="1">
    <source>
        <dbReference type="HAMAP-Rule" id="MF_01390"/>
    </source>
</evidence>
<organism>
    <name type="scientific">Adenostoma fasciculatum</name>
    <name type="common">Chamise</name>
    <dbReference type="NCBI Taxonomy" id="140993"/>
    <lineage>
        <taxon>Eukaryota</taxon>
        <taxon>Viridiplantae</taxon>
        <taxon>Streptophyta</taxon>
        <taxon>Embryophyta</taxon>
        <taxon>Tracheophyta</taxon>
        <taxon>Spermatophyta</taxon>
        <taxon>Magnoliopsida</taxon>
        <taxon>eudicotyledons</taxon>
        <taxon>Gunneridae</taxon>
        <taxon>Pentapetalae</taxon>
        <taxon>rosids</taxon>
        <taxon>fabids</taxon>
        <taxon>Rosales</taxon>
        <taxon>Rosaceae</taxon>
        <taxon>Amygdaloideae</taxon>
        <taxon>Sorbarieae</taxon>
        <taxon>Adenostoma</taxon>
    </lineage>
</organism>
<proteinExistence type="inferred from homology"/>
<name>MATK_ADEFA</name>
<geneLocation type="chloroplast"/>
<comment type="function">
    <text evidence="1">Usually encoded in the trnK tRNA gene intron. Probably assists in splicing its own and other chloroplast group II introns.</text>
</comment>
<comment type="subcellular location">
    <subcellularLocation>
        <location>Plastid</location>
        <location>Chloroplast</location>
    </subcellularLocation>
</comment>
<comment type="similarity">
    <text evidence="1">Belongs to the intron maturase 2 family. MatK subfamily.</text>
</comment>